<gene>
    <name evidence="1" type="primary">bioC</name>
    <name type="ordered locus">ECA2823</name>
</gene>
<keyword id="KW-0093">Biotin biosynthesis</keyword>
<keyword id="KW-0489">Methyltransferase</keyword>
<keyword id="KW-1185">Reference proteome</keyword>
<keyword id="KW-0949">S-adenosyl-L-methionine</keyword>
<keyword id="KW-0808">Transferase</keyword>
<comment type="function">
    <text evidence="1">Converts the free carboxyl group of a malonyl-thioester to its methyl ester by transfer of a methyl group from S-adenosyl-L-methionine (SAM). It allows to synthesize pimeloyl-ACP via the fatty acid synthetic pathway.</text>
</comment>
<comment type="catalytic activity">
    <reaction evidence="1">
        <text>malonyl-[ACP] + S-adenosyl-L-methionine = malonyl-[ACP] methyl ester + S-adenosyl-L-homocysteine</text>
        <dbReference type="Rhea" id="RHEA:17105"/>
        <dbReference type="Rhea" id="RHEA-COMP:9623"/>
        <dbReference type="Rhea" id="RHEA-COMP:9954"/>
        <dbReference type="ChEBI" id="CHEBI:57856"/>
        <dbReference type="ChEBI" id="CHEBI:59789"/>
        <dbReference type="ChEBI" id="CHEBI:78449"/>
        <dbReference type="ChEBI" id="CHEBI:78845"/>
        <dbReference type="EC" id="2.1.1.197"/>
    </reaction>
</comment>
<comment type="pathway">
    <text evidence="1">Cofactor biosynthesis; biotin biosynthesis.</text>
</comment>
<comment type="similarity">
    <text evidence="1">Belongs to the methyltransferase superfamily.</text>
</comment>
<name>BIOC_PECAS</name>
<proteinExistence type="inferred from homology"/>
<reference key="1">
    <citation type="journal article" date="2004" name="Proc. Natl. Acad. Sci. U.S.A.">
        <title>Genome sequence of the enterobacterial phytopathogen Erwinia carotovora subsp. atroseptica and characterization of virulence factors.</title>
        <authorList>
            <person name="Bell K.S."/>
            <person name="Sebaihia M."/>
            <person name="Pritchard L."/>
            <person name="Holden M.T.G."/>
            <person name="Hyman L.J."/>
            <person name="Holeva M.C."/>
            <person name="Thomson N.R."/>
            <person name="Bentley S.D."/>
            <person name="Churcher L.J.C."/>
            <person name="Mungall K."/>
            <person name="Atkin R."/>
            <person name="Bason N."/>
            <person name="Brooks K."/>
            <person name="Chillingworth T."/>
            <person name="Clark K."/>
            <person name="Doggett J."/>
            <person name="Fraser A."/>
            <person name="Hance Z."/>
            <person name="Hauser H."/>
            <person name="Jagels K."/>
            <person name="Moule S."/>
            <person name="Norbertczak H."/>
            <person name="Ormond D."/>
            <person name="Price C."/>
            <person name="Quail M.A."/>
            <person name="Sanders M."/>
            <person name="Walker D."/>
            <person name="Whitehead S."/>
            <person name="Salmond G.P.C."/>
            <person name="Birch P.R.J."/>
            <person name="Parkhill J."/>
            <person name="Toth I.K."/>
        </authorList>
    </citation>
    <scope>NUCLEOTIDE SEQUENCE [LARGE SCALE GENOMIC DNA]</scope>
    <source>
        <strain>SCRI 1043 / ATCC BAA-672</strain>
    </source>
</reference>
<accession>Q6D3C1</accession>
<dbReference type="EC" id="2.1.1.197" evidence="1"/>
<dbReference type="EMBL" id="BX950851">
    <property type="protein sequence ID" value="CAG75723.1"/>
    <property type="molecule type" value="Genomic_DNA"/>
</dbReference>
<dbReference type="RefSeq" id="WP_011094357.1">
    <property type="nucleotide sequence ID" value="NC_004547.2"/>
</dbReference>
<dbReference type="SMR" id="Q6D3C1"/>
<dbReference type="STRING" id="218491.ECA2823"/>
<dbReference type="DNASU" id="2881978"/>
<dbReference type="GeneID" id="57208488"/>
<dbReference type="KEGG" id="eca:ECA2823"/>
<dbReference type="PATRIC" id="fig|218491.5.peg.2864"/>
<dbReference type="eggNOG" id="COG2226">
    <property type="taxonomic scope" value="Bacteria"/>
</dbReference>
<dbReference type="HOGENOM" id="CLU_046586_2_2_6"/>
<dbReference type="OrthoDB" id="9760689at2"/>
<dbReference type="UniPathway" id="UPA00078"/>
<dbReference type="Proteomes" id="UP000007966">
    <property type="component" value="Chromosome"/>
</dbReference>
<dbReference type="GO" id="GO:0010340">
    <property type="term" value="F:carboxyl-O-methyltransferase activity"/>
    <property type="evidence" value="ECO:0007669"/>
    <property type="project" value="UniProtKB-UniRule"/>
</dbReference>
<dbReference type="GO" id="GO:0102130">
    <property type="term" value="F:malonyl-CoA methyltransferase activity"/>
    <property type="evidence" value="ECO:0007669"/>
    <property type="project" value="UniProtKB-EC"/>
</dbReference>
<dbReference type="GO" id="GO:0008757">
    <property type="term" value="F:S-adenosylmethionine-dependent methyltransferase activity"/>
    <property type="evidence" value="ECO:0007669"/>
    <property type="project" value="InterPro"/>
</dbReference>
<dbReference type="GO" id="GO:0009102">
    <property type="term" value="P:biotin biosynthetic process"/>
    <property type="evidence" value="ECO:0007669"/>
    <property type="project" value="UniProtKB-UniRule"/>
</dbReference>
<dbReference type="GO" id="GO:0032259">
    <property type="term" value="P:methylation"/>
    <property type="evidence" value="ECO:0007669"/>
    <property type="project" value="UniProtKB-KW"/>
</dbReference>
<dbReference type="CDD" id="cd02440">
    <property type="entry name" value="AdoMet_MTases"/>
    <property type="match status" value="1"/>
</dbReference>
<dbReference type="Gene3D" id="3.40.50.150">
    <property type="entry name" value="Vaccinia Virus protein VP39"/>
    <property type="match status" value="1"/>
</dbReference>
<dbReference type="HAMAP" id="MF_00835">
    <property type="entry name" value="BioC"/>
    <property type="match status" value="1"/>
</dbReference>
<dbReference type="InterPro" id="IPR011814">
    <property type="entry name" value="BioC"/>
</dbReference>
<dbReference type="InterPro" id="IPR013216">
    <property type="entry name" value="Methyltransf_11"/>
</dbReference>
<dbReference type="InterPro" id="IPR029063">
    <property type="entry name" value="SAM-dependent_MTases_sf"/>
</dbReference>
<dbReference type="NCBIfam" id="TIGR02072">
    <property type="entry name" value="BioC"/>
    <property type="match status" value="1"/>
</dbReference>
<dbReference type="PANTHER" id="PTHR43464:SF94">
    <property type="entry name" value="MALONYL-[ACYL-CARRIER PROTEIN] O-METHYLTRANSFERASE"/>
    <property type="match status" value="1"/>
</dbReference>
<dbReference type="PANTHER" id="PTHR43464">
    <property type="entry name" value="METHYLTRANSFERASE"/>
    <property type="match status" value="1"/>
</dbReference>
<dbReference type="Pfam" id="PF08241">
    <property type="entry name" value="Methyltransf_11"/>
    <property type="match status" value="1"/>
</dbReference>
<dbReference type="SUPFAM" id="SSF53335">
    <property type="entry name" value="S-adenosyl-L-methionine-dependent methyltransferases"/>
    <property type="match status" value="1"/>
</dbReference>
<sequence>MLTENYNKQAIAQAFGRAAGCYDRFAELQRTSGERLLALMPAHSGLQVLDAGCGTGHFSRYWRQAGRNVTALDLSAEMLAYAREQHAADRYLEGDIENLPLADSCVDICYSNLAVQWCDSLPRALGELYRITRPGGVIAFATLADGSLSELSQAWQRLDGTQRTNRFLPHSVIDAACQPYRHHLLQEREVCLFPDVLALMKSLKGIGATWLHEGRTPGLLSRARLAALSACYPQEQGGYPLSYQLVYGVIYRD</sequence>
<organism>
    <name type="scientific">Pectobacterium atrosepticum (strain SCRI 1043 / ATCC BAA-672)</name>
    <name type="common">Erwinia carotovora subsp. atroseptica</name>
    <dbReference type="NCBI Taxonomy" id="218491"/>
    <lineage>
        <taxon>Bacteria</taxon>
        <taxon>Pseudomonadati</taxon>
        <taxon>Pseudomonadota</taxon>
        <taxon>Gammaproteobacteria</taxon>
        <taxon>Enterobacterales</taxon>
        <taxon>Pectobacteriaceae</taxon>
        <taxon>Pectobacterium</taxon>
    </lineage>
</organism>
<feature type="chain" id="PRO_0000412496" description="Malonyl-[acyl-carrier protein] O-methyltransferase">
    <location>
        <begin position="1"/>
        <end position="253"/>
    </location>
</feature>
<evidence type="ECO:0000255" key="1">
    <source>
        <dbReference type="HAMAP-Rule" id="MF_00835"/>
    </source>
</evidence>
<protein>
    <recommendedName>
        <fullName evidence="1">Malonyl-[acyl-carrier protein] O-methyltransferase</fullName>
        <shortName evidence="1">Malonyl-ACP O-methyltransferase</shortName>
        <ecNumber evidence="1">2.1.1.197</ecNumber>
    </recommendedName>
    <alternativeName>
        <fullName evidence="1">Biotin synthesis protein BioC</fullName>
    </alternativeName>
</protein>